<evidence type="ECO:0000269" key="1">
    <source>
    </source>
</evidence>
<evidence type="ECO:0000303" key="2">
    <source>
    </source>
</evidence>
<evidence type="ECO:0000305" key="3"/>
<sequence length="16" mass="1708">SPTVIALRVVEALSPR</sequence>
<comment type="miscellaneous">
    <text evidence="1">On the 2D-gel the determined pI of this protein is: 7.4, its MW is: 83.1 kDa.</text>
</comment>
<comment type="caution">
    <text evidence="1">The order of the peptides shown is unknown.</text>
</comment>
<accession>P84733</accession>
<proteinExistence type="evidence at protein level"/>
<name>PS17_PINST</name>
<feature type="chain" id="PRO_0000240620" description="Putative cytochrome c oxidase subunit II PS17">
    <location>
        <begin position="1" status="less than"/>
        <end position="16" status="greater than"/>
    </location>
</feature>
<feature type="non-consecutive residues" evidence="2">
    <location>
        <begin position="8"/>
        <end position="9"/>
    </location>
</feature>
<feature type="non-terminal residue" evidence="2">
    <location>
        <position position="1"/>
    </location>
</feature>
<feature type="non-terminal residue" evidence="2">
    <location>
        <position position="16"/>
    </location>
</feature>
<keyword id="KW-0903">Direct protein sequencing</keyword>
<protein>
    <recommendedName>
        <fullName>Putative cytochrome c oxidase subunit II PS17</fullName>
    </recommendedName>
</protein>
<reference evidence="3" key="1">
    <citation type="journal article" date="2006" name="Mol. Plant Microbe Interact.">
        <title>Proteomic comparison of needles from blister rust-resistant and susceptible Pinus strobus seedlings reveals upregulation of putative disease resistance proteins.</title>
        <authorList>
            <person name="Smith J.A."/>
            <person name="Blanchette R.A."/>
            <person name="Burnes T.A."/>
            <person name="Jacobs J.J."/>
            <person name="Higgins L."/>
            <person name="Witthuhn B.A."/>
            <person name="David A.J."/>
            <person name="Gillman J.H."/>
        </authorList>
    </citation>
    <scope>PROTEIN SEQUENCE</scope>
    <source>
        <tissue evidence="1">Leaf</tissue>
    </source>
</reference>
<organism>
    <name type="scientific">Pinus strobus</name>
    <name type="common">Eastern white pine</name>
    <dbReference type="NCBI Taxonomy" id="3348"/>
    <lineage>
        <taxon>Eukaryota</taxon>
        <taxon>Viridiplantae</taxon>
        <taxon>Streptophyta</taxon>
        <taxon>Embryophyta</taxon>
        <taxon>Tracheophyta</taxon>
        <taxon>Spermatophyta</taxon>
        <taxon>Pinopsida</taxon>
        <taxon>Pinidae</taxon>
        <taxon>Conifers I</taxon>
        <taxon>Pinales</taxon>
        <taxon>Pinaceae</taxon>
        <taxon>Pinus</taxon>
        <taxon>Pinus subgen. Strobus</taxon>
    </lineage>
</organism>